<evidence type="ECO:0000255" key="1">
    <source>
        <dbReference type="HAMAP-Rule" id="MF_01077"/>
    </source>
</evidence>
<evidence type="ECO:0000256" key="2">
    <source>
        <dbReference type="SAM" id="MobiDB-lite"/>
    </source>
</evidence>
<sequence>MSDLVAKTAIDRRLADIVTPVIEGMGFELVRLRLMSGKTRTLQIMADRPDGGIVVDECAEISTAVSAALDVEDPIEENYTLEVSSPGIDRPLTRLKDFDVWTGYEARIETTELIDGRRRFKGELAGTEGDEVLITIEDGRDSYVTIGLKFDWLADAKLILTEELIAEMLRQKKASGNFDESQFDEIEESEGEEADEAEQPPTKH</sequence>
<accession>A3PNK9</accession>
<reference key="1">
    <citation type="submission" date="2007-02" db="EMBL/GenBank/DDBJ databases">
        <title>Complete sequence of chromosome 1 of Rhodobacter sphaeroides ATCC 17029.</title>
        <authorList>
            <person name="Copeland A."/>
            <person name="Lucas S."/>
            <person name="Lapidus A."/>
            <person name="Barry K."/>
            <person name="Detter J.C."/>
            <person name="Glavina del Rio T."/>
            <person name="Hammon N."/>
            <person name="Israni S."/>
            <person name="Dalin E."/>
            <person name="Tice H."/>
            <person name="Pitluck S."/>
            <person name="Kiss H."/>
            <person name="Brettin T."/>
            <person name="Bruce D."/>
            <person name="Han C."/>
            <person name="Tapia R."/>
            <person name="Gilna P."/>
            <person name="Schmutz J."/>
            <person name="Larimer F."/>
            <person name="Land M."/>
            <person name="Hauser L."/>
            <person name="Kyrpides N."/>
            <person name="Mikhailova N."/>
            <person name="Richardson P."/>
            <person name="Mackenzie C."/>
            <person name="Choudhary M."/>
            <person name="Donohue T.J."/>
            <person name="Kaplan S."/>
        </authorList>
    </citation>
    <scope>NUCLEOTIDE SEQUENCE [LARGE SCALE GENOMIC DNA]</scope>
    <source>
        <strain>ATCC 17029 / ATH 2.4.9</strain>
    </source>
</reference>
<organism>
    <name type="scientific">Cereibacter sphaeroides (strain ATCC 17029 / ATH 2.4.9)</name>
    <name type="common">Rhodobacter sphaeroides</name>
    <dbReference type="NCBI Taxonomy" id="349101"/>
    <lineage>
        <taxon>Bacteria</taxon>
        <taxon>Pseudomonadati</taxon>
        <taxon>Pseudomonadota</taxon>
        <taxon>Alphaproteobacteria</taxon>
        <taxon>Rhodobacterales</taxon>
        <taxon>Paracoccaceae</taxon>
        <taxon>Cereibacter</taxon>
    </lineage>
</organism>
<comment type="function">
    <text evidence="1">Required for maturation of 30S ribosomal subunits.</text>
</comment>
<comment type="subcellular location">
    <subcellularLocation>
        <location evidence="1">Cytoplasm</location>
    </subcellularLocation>
</comment>
<comment type="similarity">
    <text evidence="1">Belongs to the RimP family.</text>
</comment>
<keyword id="KW-0963">Cytoplasm</keyword>
<keyword id="KW-0690">Ribosome biogenesis</keyword>
<gene>
    <name evidence="1" type="primary">rimP</name>
    <name type="ordered locus">Rsph17029_2823</name>
</gene>
<protein>
    <recommendedName>
        <fullName evidence="1">Ribosome maturation factor RimP</fullName>
    </recommendedName>
</protein>
<name>RIMP_CERS1</name>
<dbReference type="EMBL" id="CP000577">
    <property type="protein sequence ID" value="ABN77925.1"/>
    <property type="molecule type" value="Genomic_DNA"/>
</dbReference>
<dbReference type="RefSeq" id="WP_009563203.1">
    <property type="nucleotide sequence ID" value="NC_009049.1"/>
</dbReference>
<dbReference type="SMR" id="A3PNK9"/>
<dbReference type="KEGG" id="rsh:Rsph17029_2823"/>
<dbReference type="HOGENOM" id="CLU_070525_0_1_5"/>
<dbReference type="GO" id="GO:0005829">
    <property type="term" value="C:cytosol"/>
    <property type="evidence" value="ECO:0007669"/>
    <property type="project" value="TreeGrafter"/>
</dbReference>
<dbReference type="GO" id="GO:0000028">
    <property type="term" value="P:ribosomal small subunit assembly"/>
    <property type="evidence" value="ECO:0007669"/>
    <property type="project" value="TreeGrafter"/>
</dbReference>
<dbReference type="GO" id="GO:0006412">
    <property type="term" value="P:translation"/>
    <property type="evidence" value="ECO:0007669"/>
    <property type="project" value="TreeGrafter"/>
</dbReference>
<dbReference type="CDD" id="cd01734">
    <property type="entry name" value="YlxS_C"/>
    <property type="match status" value="1"/>
</dbReference>
<dbReference type="FunFam" id="3.30.300.70:FF:000001">
    <property type="entry name" value="Ribosome maturation factor RimP"/>
    <property type="match status" value="1"/>
</dbReference>
<dbReference type="Gene3D" id="2.30.30.180">
    <property type="entry name" value="Ribosome maturation factor RimP, C-terminal domain"/>
    <property type="match status" value="1"/>
</dbReference>
<dbReference type="Gene3D" id="3.30.300.70">
    <property type="entry name" value="RimP-like superfamily, N-terminal"/>
    <property type="match status" value="1"/>
</dbReference>
<dbReference type="HAMAP" id="MF_01077">
    <property type="entry name" value="RimP"/>
    <property type="match status" value="1"/>
</dbReference>
<dbReference type="InterPro" id="IPR003728">
    <property type="entry name" value="Ribosome_maturation_RimP"/>
</dbReference>
<dbReference type="InterPro" id="IPR028998">
    <property type="entry name" value="RimP_C"/>
</dbReference>
<dbReference type="InterPro" id="IPR036847">
    <property type="entry name" value="RimP_C_sf"/>
</dbReference>
<dbReference type="InterPro" id="IPR028989">
    <property type="entry name" value="RimP_N"/>
</dbReference>
<dbReference type="InterPro" id="IPR035956">
    <property type="entry name" value="RimP_N_sf"/>
</dbReference>
<dbReference type="NCBIfam" id="NF000932">
    <property type="entry name" value="PRK00092.2-5"/>
    <property type="match status" value="1"/>
</dbReference>
<dbReference type="PANTHER" id="PTHR33867">
    <property type="entry name" value="RIBOSOME MATURATION FACTOR RIMP"/>
    <property type="match status" value="1"/>
</dbReference>
<dbReference type="PANTHER" id="PTHR33867:SF1">
    <property type="entry name" value="RIBOSOME MATURATION FACTOR RIMP"/>
    <property type="match status" value="1"/>
</dbReference>
<dbReference type="Pfam" id="PF17384">
    <property type="entry name" value="DUF150_C"/>
    <property type="match status" value="1"/>
</dbReference>
<dbReference type="Pfam" id="PF02576">
    <property type="entry name" value="RimP_N"/>
    <property type="match status" value="1"/>
</dbReference>
<dbReference type="SUPFAM" id="SSF74942">
    <property type="entry name" value="YhbC-like, C-terminal domain"/>
    <property type="match status" value="1"/>
</dbReference>
<dbReference type="SUPFAM" id="SSF75420">
    <property type="entry name" value="YhbC-like, N-terminal domain"/>
    <property type="match status" value="1"/>
</dbReference>
<proteinExistence type="inferred from homology"/>
<feature type="chain" id="PRO_1000064756" description="Ribosome maturation factor RimP">
    <location>
        <begin position="1"/>
        <end position="204"/>
    </location>
</feature>
<feature type="region of interest" description="Disordered" evidence="2">
    <location>
        <begin position="176"/>
        <end position="204"/>
    </location>
</feature>
<feature type="compositionally biased region" description="Acidic residues" evidence="2">
    <location>
        <begin position="181"/>
        <end position="198"/>
    </location>
</feature>